<feature type="initiator methionine" description="Removed" evidence="2 3">
    <location>
        <position position="1"/>
    </location>
</feature>
<feature type="chain" id="PRO_0000053101" description="Hemoglobin subunit beta-4">
    <location>
        <begin position="2"/>
        <end position="148"/>
    </location>
</feature>
<feature type="domain" description="Globin" evidence="1">
    <location>
        <begin position="3"/>
        <end position="148"/>
    </location>
</feature>
<feature type="binding site" description="distal binding residue">
    <location>
        <position position="64"/>
    </location>
    <ligand>
        <name>heme b</name>
        <dbReference type="ChEBI" id="CHEBI:60344"/>
    </ligand>
    <ligandPart>
        <name>Fe</name>
        <dbReference type="ChEBI" id="CHEBI:18248"/>
    </ligandPart>
</feature>
<feature type="binding site" description="proximal binding residue">
    <location>
        <position position="93"/>
    </location>
    <ligand>
        <name>heme b</name>
        <dbReference type="ChEBI" id="CHEBI:60344"/>
    </ligand>
    <ligandPart>
        <name>Fe</name>
        <dbReference type="ChEBI" id="CHEBI:18248"/>
    </ligandPart>
</feature>
<feature type="sequence conflict" description="In Ref. 2; AA sequence." evidence="4" ref="2">
    <original>P</original>
    <variation>A</variation>
    <location>
        <position position="7"/>
    </location>
</feature>
<feature type="sequence conflict" description="In Ref. 3; AA sequence." evidence="4" ref="3">
    <original>NLDD</original>
    <variation>DLBB</variation>
    <location>
        <begin position="78"/>
        <end position="81"/>
    </location>
</feature>
<feature type="sequence conflict" description="In Ref. 2; AA sequence." evidence="4" ref="2">
    <original>TA</original>
    <variation>AT</variation>
    <location>
        <begin position="87"/>
        <end position="88"/>
    </location>
</feature>
<feature type="helix" evidence="6">
    <location>
        <begin position="6"/>
        <end position="18"/>
    </location>
</feature>
<feature type="helix" evidence="6">
    <location>
        <begin position="21"/>
        <end position="35"/>
    </location>
</feature>
<feature type="helix" evidence="6">
    <location>
        <begin position="37"/>
        <end position="42"/>
    </location>
</feature>
<feature type="helix" evidence="6">
    <location>
        <begin position="44"/>
        <end position="46"/>
    </location>
</feature>
<feature type="helix" evidence="6">
    <location>
        <begin position="52"/>
        <end position="56"/>
    </location>
</feature>
<feature type="helix" evidence="6">
    <location>
        <begin position="59"/>
        <end position="77"/>
    </location>
</feature>
<feature type="turn" evidence="5">
    <location>
        <begin position="78"/>
        <end position="80"/>
    </location>
</feature>
<feature type="helix" evidence="6">
    <location>
        <begin position="82"/>
        <end position="85"/>
    </location>
</feature>
<feature type="helix" evidence="6">
    <location>
        <begin position="87"/>
        <end position="95"/>
    </location>
</feature>
<feature type="helix" evidence="6">
    <location>
        <begin position="102"/>
        <end position="123"/>
    </location>
</feature>
<feature type="helix" evidence="6">
    <location>
        <begin position="126"/>
        <end position="144"/>
    </location>
</feature>
<proteinExistence type="evidence at protein level"/>
<accession>P02141</accession>
<accession>Q91199</accession>
<comment type="function">
    <text>Involved in oxygen transport from gills to the various peripheral tissues.</text>
</comment>
<comment type="subunit">
    <text>Heterotetramer of two alpha chains and two beta chains.</text>
</comment>
<comment type="tissue specificity">
    <text>Red blood cells.</text>
</comment>
<comment type="similarity">
    <text evidence="1">Belongs to the globin family.</text>
</comment>
<protein>
    <recommendedName>
        <fullName>Hemoglobin subunit beta-4</fullName>
    </recommendedName>
    <alternativeName>
        <fullName>Beta-4-globin</fullName>
    </alternativeName>
    <alternativeName>
        <fullName>Hemoglobin beta-4 chain</fullName>
    </alternativeName>
    <alternativeName>
        <fullName>Hemoglobin beta-IV chain</fullName>
    </alternativeName>
</protein>
<evidence type="ECO:0000255" key="1">
    <source>
        <dbReference type="PROSITE-ProRule" id="PRU00238"/>
    </source>
</evidence>
<evidence type="ECO:0000269" key="2">
    <source>
    </source>
</evidence>
<evidence type="ECO:0000269" key="3">
    <source ref="2"/>
</evidence>
<evidence type="ECO:0000305" key="4"/>
<evidence type="ECO:0007829" key="5">
    <source>
        <dbReference type="PDB" id="2R1H"/>
    </source>
</evidence>
<evidence type="ECO:0007829" key="6">
    <source>
        <dbReference type="PDB" id="3BOM"/>
    </source>
</evidence>
<keyword id="KW-0002">3D-structure</keyword>
<keyword id="KW-0903">Direct protein sequencing</keyword>
<keyword id="KW-0349">Heme</keyword>
<keyword id="KW-0408">Iron</keyword>
<keyword id="KW-0479">Metal-binding</keyword>
<keyword id="KW-0561">Oxygen transport</keyword>
<keyword id="KW-0813">Transport</keyword>
<sequence>MVDWTDPERSAIVGLWGKISVDEIGPQALARLLIVSPWTQRHFSTFGNLSTPAAIMGNPAVAKHGKTVMHGLDRAVQNLDDIKNTYTALSVMHSEKLHVDPDNFRLLADCITVCVAAKLGPAVFSADTQEAFQKFLAVVVSALGRQYH</sequence>
<gene>
    <name type="primary">hbb4</name>
</gene>
<dbReference type="EMBL" id="D82926">
    <property type="protein sequence ID" value="BAA11632.1"/>
    <property type="molecule type" value="mRNA"/>
</dbReference>
<dbReference type="PIR" id="A02461">
    <property type="entry name" value="HBTR4"/>
</dbReference>
<dbReference type="RefSeq" id="NP_001118017.1">
    <property type="nucleotide sequence ID" value="NM_001124545.1"/>
</dbReference>
<dbReference type="PDB" id="2R1H">
    <property type="method" value="X-ray"/>
    <property type="resolution" value="1.90 A"/>
    <property type="chains" value="B/D=2-148"/>
</dbReference>
<dbReference type="PDB" id="3BOM">
    <property type="method" value="X-ray"/>
    <property type="resolution" value="1.35 A"/>
    <property type="chains" value="B/D=2-148"/>
</dbReference>
<dbReference type="PDBsum" id="2R1H"/>
<dbReference type="PDBsum" id="3BOM"/>
<dbReference type="SMR" id="P02141"/>
<dbReference type="GeneID" id="100136291"/>
<dbReference type="KEGG" id="omy:100136291"/>
<dbReference type="OrthoDB" id="9886081at2759"/>
<dbReference type="EvolutionaryTrace" id="P02141"/>
<dbReference type="Proteomes" id="UP000694395">
    <property type="component" value="Unplaced"/>
</dbReference>
<dbReference type="GO" id="GO:0072562">
    <property type="term" value="C:blood microparticle"/>
    <property type="evidence" value="ECO:0007669"/>
    <property type="project" value="TreeGrafter"/>
</dbReference>
<dbReference type="GO" id="GO:0031838">
    <property type="term" value="C:haptoglobin-hemoglobin complex"/>
    <property type="evidence" value="ECO:0007669"/>
    <property type="project" value="TreeGrafter"/>
</dbReference>
<dbReference type="GO" id="GO:0005833">
    <property type="term" value="C:hemoglobin complex"/>
    <property type="evidence" value="ECO:0007669"/>
    <property type="project" value="InterPro"/>
</dbReference>
<dbReference type="GO" id="GO:0031720">
    <property type="term" value="F:haptoglobin binding"/>
    <property type="evidence" value="ECO:0007669"/>
    <property type="project" value="TreeGrafter"/>
</dbReference>
<dbReference type="GO" id="GO:0020037">
    <property type="term" value="F:heme binding"/>
    <property type="evidence" value="ECO:0007669"/>
    <property type="project" value="InterPro"/>
</dbReference>
<dbReference type="GO" id="GO:0046872">
    <property type="term" value="F:metal ion binding"/>
    <property type="evidence" value="ECO:0007669"/>
    <property type="project" value="UniProtKB-KW"/>
</dbReference>
<dbReference type="GO" id="GO:0043177">
    <property type="term" value="F:organic acid binding"/>
    <property type="evidence" value="ECO:0007669"/>
    <property type="project" value="TreeGrafter"/>
</dbReference>
<dbReference type="GO" id="GO:0019825">
    <property type="term" value="F:oxygen binding"/>
    <property type="evidence" value="ECO:0007669"/>
    <property type="project" value="InterPro"/>
</dbReference>
<dbReference type="GO" id="GO:0005344">
    <property type="term" value="F:oxygen carrier activity"/>
    <property type="evidence" value="ECO:0007669"/>
    <property type="project" value="UniProtKB-KW"/>
</dbReference>
<dbReference type="GO" id="GO:0004601">
    <property type="term" value="F:peroxidase activity"/>
    <property type="evidence" value="ECO:0007669"/>
    <property type="project" value="TreeGrafter"/>
</dbReference>
<dbReference type="GO" id="GO:0042744">
    <property type="term" value="P:hydrogen peroxide catabolic process"/>
    <property type="evidence" value="ECO:0007669"/>
    <property type="project" value="TreeGrafter"/>
</dbReference>
<dbReference type="CDD" id="cd08925">
    <property type="entry name" value="Hb-beta-like"/>
    <property type="match status" value="1"/>
</dbReference>
<dbReference type="FunFam" id="1.10.490.10:FF:000001">
    <property type="entry name" value="Hemoglobin subunit beta"/>
    <property type="match status" value="1"/>
</dbReference>
<dbReference type="Gene3D" id="1.10.490.10">
    <property type="entry name" value="Globins"/>
    <property type="match status" value="1"/>
</dbReference>
<dbReference type="InterPro" id="IPR000971">
    <property type="entry name" value="Globin"/>
</dbReference>
<dbReference type="InterPro" id="IPR009050">
    <property type="entry name" value="Globin-like_sf"/>
</dbReference>
<dbReference type="InterPro" id="IPR012292">
    <property type="entry name" value="Globin/Proto"/>
</dbReference>
<dbReference type="InterPro" id="IPR002337">
    <property type="entry name" value="Hemoglobin_b"/>
</dbReference>
<dbReference type="InterPro" id="IPR050056">
    <property type="entry name" value="Hemoglobin_oxygen_transport"/>
</dbReference>
<dbReference type="PANTHER" id="PTHR11442">
    <property type="entry name" value="HEMOGLOBIN FAMILY MEMBER"/>
    <property type="match status" value="1"/>
</dbReference>
<dbReference type="PANTHER" id="PTHR11442:SF102">
    <property type="entry name" value="HEMOGLOBIN SUBUNIT BETA-1-RELATED"/>
    <property type="match status" value="1"/>
</dbReference>
<dbReference type="Pfam" id="PF00042">
    <property type="entry name" value="Globin"/>
    <property type="match status" value="1"/>
</dbReference>
<dbReference type="PRINTS" id="PR00814">
    <property type="entry name" value="BETAHAEM"/>
</dbReference>
<dbReference type="SUPFAM" id="SSF46458">
    <property type="entry name" value="Globin-like"/>
    <property type="match status" value="1"/>
</dbReference>
<dbReference type="PROSITE" id="PS01033">
    <property type="entry name" value="GLOBIN"/>
    <property type="match status" value="1"/>
</dbReference>
<name>HBB4_ONCMY</name>
<reference key="1">
    <citation type="submission" date="1995-12" db="EMBL/GenBank/DDBJ databases">
        <title>Cloning and sequencing of rainbow trout beta-globin cDNA.</title>
        <authorList>
            <person name="Yoshizaki G."/>
            <person name="Kang J.-H."/>
            <person name="Sakuma K."/>
            <person name="Aoki T."/>
            <person name="Takashima F."/>
        </authorList>
    </citation>
    <scope>NUCLEOTIDE SEQUENCE [MRNA]</scope>
</reference>
<reference key="2">
    <citation type="journal article" date="1984" name="Biochim. Biophys. Acta">
        <title>Amino-acid sequence of beta-chain of hemoglobin IV from trout (Salmo irideus).</title>
        <authorList>
            <person name="Petruzzelli R."/>
            <person name="Barra D."/>
            <person name="Goffredo B.M."/>
            <person name="Bossa F."/>
            <person name="Coletta M."/>
            <person name="Brunori M."/>
        </authorList>
    </citation>
    <scope>PROTEIN SEQUENCE OF 2-148</scope>
</reference>
<reference key="3">
    <citation type="journal article" date="1976" name="FEBS Lett.">
        <title>Primary structure of hemoglobins from trout (Salmo irideus). Partial determination of amino acid sequence of HB trout IV.</title>
        <authorList>
            <person name="Bossa F."/>
            <person name="Barra D."/>
            <person name="Coletta M."/>
            <person name="Martini F."/>
            <person name="Liverzani A."/>
            <person name="Petruzzelli R."/>
            <person name="Bonaventura J."/>
            <person name="Brunori M."/>
        </authorList>
    </citation>
    <scope>PROTEIN SEQUENCE OF 2-42 AND 46-86</scope>
</reference>
<organism>
    <name type="scientific">Oncorhynchus mykiss</name>
    <name type="common">Rainbow trout</name>
    <name type="synonym">Salmo gairdneri</name>
    <dbReference type="NCBI Taxonomy" id="8022"/>
    <lineage>
        <taxon>Eukaryota</taxon>
        <taxon>Metazoa</taxon>
        <taxon>Chordata</taxon>
        <taxon>Craniata</taxon>
        <taxon>Vertebrata</taxon>
        <taxon>Euteleostomi</taxon>
        <taxon>Actinopterygii</taxon>
        <taxon>Neopterygii</taxon>
        <taxon>Teleostei</taxon>
        <taxon>Protacanthopterygii</taxon>
        <taxon>Salmoniformes</taxon>
        <taxon>Salmonidae</taxon>
        <taxon>Salmoninae</taxon>
        <taxon>Oncorhynchus</taxon>
    </lineage>
</organism>